<accession>P12552</accession>
<evidence type="ECO:0000255" key="1"/>
<evidence type="ECO:0000305" key="2"/>
<reference key="1">
    <citation type="journal article" date="1984" name="Nucleic Acids Res.">
        <title>Nucleotide sequence of the essential region of bacteriophage P4.</title>
        <authorList>
            <person name="Lin C.-S."/>
        </authorList>
    </citation>
    <scope>NUCLEOTIDE SEQUENCE [GENOMIC DNA]</scope>
</reference>
<reference key="2">
    <citation type="journal article" date="1990" name="Nucleic Acids Res.">
        <title>DNA sequence of satellite bacteriophage P4.</title>
        <authorList>
            <person name="Halling C."/>
            <person name="Calendar R."/>
            <person name="Christie G.E."/>
            <person name="Dale E.C."/>
            <person name="Deho G."/>
            <person name="Finkel S."/>
            <person name="Flensburg J."/>
            <person name="Ghisotti D."/>
            <person name="Kahn M.L."/>
            <person name="Lane K.B."/>
            <person name="Lin C.-S."/>
            <person name="Lindqvist B.H."/>
            <person name="Pierson L.S."/>
            <person name="Six E.W."/>
            <person name="Sunshine M.G."/>
            <person name="Ziermann R."/>
        </authorList>
    </citation>
    <scope>NUCLEOTIDE SEQUENCE [LARGE SCALE GENOMIC DNA]</scope>
</reference>
<organismHost>
    <name type="scientific">Escherichia coli</name>
    <dbReference type="NCBI Taxonomy" id="562"/>
</organismHost>
<sequence>MQAVFSSPSPAPVTPLMPLPDITQERFLRVPEVMHLCGLSRSTIYELIRKGEFPPQVSLGGKNVAWLHSEVTAWMAGRIAGRKRGYDA</sequence>
<keyword id="KW-0238">DNA-binding</keyword>
<keyword id="KW-1185">Reference proteome</keyword>
<dbReference type="EMBL" id="X02534">
    <property type="protein sequence ID" value="CAA26377.1"/>
    <property type="molecule type" value="Genomic_DNA"/>
</dbReference>
<dbReference type="EMBL" id="X51522">
    <property type="protein sequence ID" value="CAA35903.1"/>
    <property type="molecule type" value="Genomic_DNA"/>
</dbReference>
<dbReference type="RefSeq" id="NP_042041.1">
    <property type="nucleotide sequence ID" value="NC_001609.1"/>
</dbReference>
<dbReference type="SMR" id="P12552"/>
<dbReference type="GeneID" id="1261090"/>
<dbReference type="KEGG" id="vg:1261090"/>
<dbReference type="OrthoDB" id="29033at10239"/>
<dbReference type="Proteomes" id="UP000009093">
    <property type="component" value="Genome"/>
</dbReference>
<dbReference type="GO" id="GO:0003677">
    <property type="term" value="F:DNA binding"/>
    <property type="evidence" value="ECO:0007669"/>
    <property type="project" value="UniProtKB-KW"/>
</dbReference>
<dbReference type="Gene3D" id="1.10.238.160">
    <property type="match status" value="1"/>
</dbReference>
<dbReference type="InterPro" id="IPR010260">
    <property type="entry name" value="AlpA"/>
</dbReference>
<dbReference type="InterPro" id="IPR009061">
    <property type="entry name" value="DNA-bd_dom_put_sf"/>
</dbReference>
<dbReference type="InterPro" id="IPR052931">
    <property type="entry name" value="Prophage_regulatory_activator"/>
</dbReference>
<dbReference type="PANTHER" id="PTHR36154">
    <property type="entry name" value="DNA-BINDING TRANSCRIPTIONAL ACTIVATOR ALPA"/>
    <property type="match status" value="1"/>
</dbReference>
<dbReference type="PANTHER" id="PTHR36154:SF1">
    <property type="entry name" value="DNA-BINDING TRANSCRIPTIONAL ACTIVATOR ALPA"/>
    <property type="match status" value="1"/>
</dbReference>
<dbReference type="Pfam" id="PF05930">
    <property type="entry name" value="Phage_AlpA"/>
    <property type="match status" value="1"/>
</dbReference>
<dbReference type="SUPFAM" id="SSF46955">
    <property type="entry name" value="Putative DNA-binding domain"/>
    <property type="match status" value="1"/>
</dbReference>
<feature type="chain" id="PRO_0000165235" description="Uncharacterized protein ORF88">
    <location>
        <begin position="1"/>
        <end position="88"/>
    </location>
</feature>
<feature type="DNA-binding region" description="H-T-H motif" evidence="1">
    <location>
        <begin position="30"/>
        <end position="49"/>
    </location>
</feature>
<name>Y9K_BPP4</name>
<proteinExistence type="predicted"/>
<comment type="similarity">
    <text evidence="2">To E.coli prophage CP4-57 regulatory protein alpA.</text>
</comment>
<organism>
    <name type="scientific">Enterobacteria phage P4</name>
    <name type="common">Bacteriophage P4</name>
    <dbReference type="NCBI Taxonomy" id="10680"/>
    <lineage>
        <taxon>Viruses</taxon>
        <taxon>Duplodnaviria</taxon>
        <taxon>Heunggongvirae</taxon>
        <taxon>Uroviricota</taxon>
        <taxon>Caudoviricetes</taxon>
    </lineage>
</organism>
<protein>
    <recommendedName>
        <fullName>Uncharacterized protein ORF88</fullName>
    </recommendedName>
    <alternativeName>
        <fullName>Putative DNA-binding protein</fullName>
    </alternativeName>
</protein>